<sequence>MRIDIITCLPKLLDSFFGHSILKRAQEKGIAEVVVHDLRTYTLFKHKQVDDYSYGGSAGMVLMVEPIDRCITALKAEREYDAVIYMTPDGKTFDQQTANRFSLYKNIIILCGHYKGVDERARQAFITHEISIGDYVLSGGELAAAVVSDALIRLIPGVLSDETSALTDSFQDSLLAPAVYTRPADYKGMIVPEILLSGNEKEIEKWRFENALERTKERRPDLYQKFTKAYDADGK</sequence>
<name>TRMD_CYTH3</name>
<comment type="function">
    <text evidence="1">Specifically methylates guanosine-37 in various tRNAs.</text>
</comment>
<comment type="catalytic activity">
    <reaction evidence="1">
        <text>guanosine(37) in tRNA + S-adenosyl-L-methionine = N(1)-methylguanosine(37) in tRNA + S-adenosyl-L-homocysteine + H(+)</text>
        <dbReference type="Rhea" id="RHEA:36899"/>
        <dbReference type="Rhea" id="RHEA-COMP:10145"/>
        <dbReference type="Rhea" id="RHEA-COMP:10147"/>
        <dbReference type="ChEBI" id="CHEBI:15378"/>
        <dbReference type="ChEBI" id="CHEBI:57856"/>
        <dbReference type="ChEBI" id="CHEBI:59789"/>
        <dbReference type="ChEBI" id="CHEBI:73542"/>
        <dbReference type="ChEBI" id="CHEBI:74269"/>
        <dbReference type="EC" id="2.1.1.228"/>
    </reaction>
</comment>
<comment type="subunit">
    <text evidence="1">Homodimer.</text>
</comment>
<comment type="subcellular location">
    <subcellularLocation>
        <location evidence="1">Cytoplasm</location>
    </subcellularLocation>
</comment>
<comment type="similarity">
    <text evidence="1">Belongs to the RNA methyltransferase TrmD family.</text>
</comment>
<accession>Q11YV4</accession>
<feature type="chain" id="PRO_0000257409" description="tRNA (guanine-N(1)-)-methyltransferase">
    <location>
        <begin position="1"/>
        <end position="235"/>
    </location>
</feature>
<feature type="binding site" evidence="1">
    <location>
        <position position="112"/>
    </location>
    <ligand>
        <name>S-adenosyl-L-methionine</name>
        <dbReference type="ChEBI" id="CHEBI:59789"/>
    </ligand>
</feature>
<feature type="binding site" evidence="1">
    <location>
        <begin position="132"/>
        <end position="137"/>
    </location>
    <ligand>
        <name>S-adenosyl-L-methionine</name>
        <dbReference type="ChEBI" id="CHEBI:59789"/>
    </ligand>
</feature>
<proteinExistence type="inferred from homology"/>
<evidence type="ECO:0000255" key="1">
    <source>
        <dbReference type="HAMAP-Rule" id="MF_00605"/>
    </source>
</evidence>
<protein>
    <recommendedName>
        <fullName evidence="1">tRNA (guanine-N(1)-)-methyltransferase</fullName>
        <ecNumber evidence="1">2.1.1.228</ecNumber>
    </recommendedName>
    <alternativeName>
        <fullName evidence="1">M1G-methyltransferase</fullName>
    </alternativeName>
    <alternativeName>
        <fullName evidence="1">tRNA [GM37] methyltransferase</fullName>
    </alternativeName>
</protein>
<reference key="1">
    <citation type="journal article" date="2007" name="Appl. Environ. Microbiol.">
        <title>Genome sequence of the cellulolytic gliding bacterium Cytophaga hutchinsonii.</title>
        <authorList>
            <person name="Xie G."/>
            <person name="Bruce D.C."/>
            <person name="Challacombe J.F."/>
            <person name="Chertkov O."/>
            <person name="Detter J.C."/>
            <person name="Gilna P."/>
            <person name="Han C.S."/>
            <person name="Lucas S."/>
            <person name="Misra M."/>
            <person name="Myers G.L."/>
            <person name="Richardson P."/>
            <person name="Tapia R."/>
            <person name="Thayer N."/>
            <person name="Thompson L.S."/>
            <person name="Brettin T.S."/>
            <person name="Henrissat B."/>
            <person name="Wilson D.B."/>
            <person name="McBride M.J."/>
        </authorList>
    </citation>
    <scope>NUCLEOTIDE SEQUENCE [LARGE SCALE GENOMIC DNA]</scope>
    <source>
        <strain>ATCC 33406 / DSM 1761 / JCM 20678 / CIP 103989 / IAM 12607 / NBRC 15051 / NCIMB 9469 / D465</strain>
    </source>
</reference>
<gene>
    <name evidence="1" type="primary">trmD</name>
    <name type="ordered locus">CHU_0119</name>
</gene>
<dbReference type="EC" id="2.1.1.228" evidence="1"/>
<dbReference type="EMBL" id="CP000383">
    <property type="protein sequence ID" value="ABG57412.1"/>
    <property type="molecule type" value="Genomic_DNA"/>
</dbReference>
<dbReference type="RefSeq" id="WP_011583528.1">
    <property type="nucleotide sequence ID" value="NC_008255.1"/>
</dbReference>
<dbReference type="SMR" id="Q11YV4"/>
<dbReference type="STRING" id="269798.CHU_0119"/>
<dbReference type="KEGG" id="chu:CHU_0119"/>
<dbReference type="eggNOG" id="COG0336">
    <property type="taxonomic scope" value="Bacteria"/>
</dbReference>
<dbReference type="HOGENOM" id="CLU_047363_0_1_10"/>
<dbReference type="OrthoDB" id="9807416at2"/>
<dbReference type="Proteomes" id="UP000001822">
    <property type="component" value="Chromosome"/>
</dbReference>
<dbReference type="GO" id="GO:0005829">
    <property type="term" value="C:cytosol"/>
    <property type="evidence" value="ECO:0007669"/>
    <property type="project" value="TreeGrafter"/>
</dbReference>
<dbReference type="GO" id="GO:0052906">
    <property type="term" value="F:tRNA (guanine(37)-N1)-methyltransferase activity"/>
    <property type="evidence" value="ECO:0007669"/>
    <property type="project" value="UniProtKB-UniRule"/>
</dbReference>
<dbReference type="GO" id="GO:0002939">
    <property type="term" value="P:tRNA N1-guanine methylation"/>
    <property type="evidence" value="ECO:0007669"/>
    <property type="project" value="TreeGrafter"/>
</dbReference>
<dbReference type="CDD" id="cd18080">
    <property type="entry name" value="TrmD-like"/>
    <property type="match status" value="1"/>
</dbReference>
<dbReference type="FunFam" id="3.40.1280.10:FF:000001">
    <property type="entry name" value="tRNA (guanine-N(1)-)-methyltransferase"/>
    <property type="match status" value="1"/>
</dbReference>
<dbReference type="Gene3D" id="3.40.1280.10">
    <property type="match status" value="1"/>
</dbReference>
<dbReference type="Gene3D" id="1.10.1270.20">
    <property type="entry name" value="tRNA(m1g37)methyltransferase, domain 2"/>
    <property type="match status" value="1"/>
</dbReference>
<dbReference type="HAMAP" id="MF_00605">
    <property type="entry name" value="TrmD"/>
    <property type="match status" value="1"/>
</dbReference>
<dbReference type="InterPro" id="IPR029028">
    <property type="entry name" value="Alpha/beta_knot_MTases"/>
</dbReference>
<dbReference type="InterPro" id="IPR023148">
    <property type="entry name" value="tRNA_m1G_MeTrfase_C_sf"/>
</dbReference>
<dbReference type="InterPro" id="IPR002649">
    <property type="entry name" value="tRNA_m1G_MeTrfase_TrmD"/>
</dbReference>
<dbReference type="InterPro" id="IPR029026">
    <property type="entry name" value="tRNA_m1G_MTases_N"/>
</dbReference>
<dbReference type="InterPro" id="IPR016009">
    <property type="entry name" value="tRNA_MeTrfase_TRMD/TRM10"/>
</dbReference>
<dbReference type="NCBIfam" id="NF000648">
    <property type="entry name" value="PRK00026.1"/>
    <property type="match status" value="1"/>
</dbReference>
<dbReference type="NCBIfam" id="TIGR00088">
    <property type="entry name" value="trmD"/>
    <property type="match status" value="1"/>
</dbReference>
<dbReference type="PANTHER" id="PTHR46417">
    <property type="entry name" value="TRNA (GUANINE-N(1)-)-METHYLTRANSFERASE"/>
    <property type="match status" value="1"/>
</dbReference>
<dbReference type="PANTHER" id="PTHR46417:SF1">
    <property type="entry name" value="TRNA (GUANINE-N(1)-)-METHYLTRANSFERASE"/>
    <property type="match status" value="1"/>
</dbReference>
<dbReference type="Pfam" id="PF01746">
    <property type="entry name" value="tRNA_m1G_MT"/>
    <property type="match status" value="1"/>
</dbReference>
<dbReference type="PIRSF" id="PIRSF000386">
    <property type="entry name" value="tRNA_mtase"/>
    <property type="match status" value="1"/>
</dbReference>
<dbReference type="SUPFAM" id="SSF75217">
    <property type="entry name" value="alpha/beta knot"/>
    <property type="match status" value="1"/>
</dbReference>
<keyword id="KW-0963">Cytoplasm</keyword>
<keyword id="KW-0489">Methyltransferase</keyword>
<keyword id="KW-1185">Reference proteome</keyword>
<keyword id="KW-0949">S-adenosyl-L-methionine</keyword>
<keyword id="KW-0808">Transferase</keyword>
<keyword id="KW-0819">tRNA processing</keyword>
<organism>
    <name type="scientific">Cytophaga hutchinsonii (strain ATCC 33406 / DSM 1761 / CIP 103989 / NBRC 15051 / NCIMB 9469 / D465)</name>
    <dbReference type="NCBI Taxonomy" id="269798"/>
    <lineage>
        <taxon>Bacteria</taxon>
        <taxon>Pseudomonadati</taxon>
        <taxon>Bacteroidota</taxon>
        <taxon>Cytophagia</taxon>
        <taxon>Cytophagales</taxon>
        <taxon>Cytophagaceae</taxon>
        <taxon>Cytophaga</taxon>
    </lineage>
</organism>